<accession>Q5A0Y2</accession>
<accession>A0A1D8PMQ9</accession>
<organism>
    <name type="scientific">Candida albicans (strain SC5314 / ATCC MYA-2876)</name>
    <name type="common">Yeast</name>
    <dbReference type="NCBI Taxonomy" id="237561"/>
    <lineage>
        <taxon>Eukaryota</taxon>
        <taxon>Fungi</taxon>
        <taxon>Dikarya</taxon>
        <taxon>Ascomycota</taxon>
        <taxon>Saccharomycotina</taxon>
        <taxon>Pichiomycetes</taxon>
        <taxon>Debaryomycetaceae</taxon>
        <taxon>Candida/Lodderomyces clade</taxon>
        <taxon>Candida</taxon>
    </lineage>
</organism>
<gene>
    <name type="primary">PUS5</name>
    <name type="ordered locus">CAALFM_C406950WA</name>
    <name type="ORF">CaO19.10626</name>
    <name type="ORF">CaO19.3114</name>
</gene>
<keyword id="KW-0413">Isomerase</keyword>
<keyword id="KW-0496">Mitochondrion</keyword>
<keyword id="KW-1185">Reference proteome</keyword>
<keyword id="KW-0698">rRNA processing</keyword>
<proteinExistence type="inferred from homology"/>
<feature type="chain" id="PRO_0000162750" description="21S rRNA pseudouridine(2819) synthase">
    <location>
        <begin position="1"/>
        <end position="248"/>
    </location>
</feature>
<feature type="active site" evidence="1">
    <location>
        <position position="58"/>
    </location>
</feature>
<comment type="function">
    <text evidence="2">Pseudouridylate synthase responsible for the pseudouridine-2819 formation in mitochondrial 21S rRNA. May modulate the efficiency or the fidelity of the mitochondrial translation machinery.</text>
</comment>
<comment type="catalytic activity">
    <reaction evidence="2">
        <text>uridine(2819) in 21S rRNA = pseudouridine(2819) in 21S rRNA</text>
        <dbReference type="Rhea" id="RHEA:42556"/>
        <dbReference type="Rhea" id="RHEA-COMP:10113"/>
        <dbReference type="Rhea" id="RHEA-COMP:10114"/>
        <dbReference type="ChEBI" id="CHEBI:65314"/>
        <dbReference type="ChEBI" id="CHEBI:65315"/>
        <dbReference type="EC" id="5.4.99.43"/>
    </reaction>
</comment>
<comment type="subcellular location">
    <subcellularLocation>
        <location evidence="2">Mitochondrion</location>
    </subcellularLocation>
</comment>
<comment type="similarity">
    <text evidence="3">Belongs to the pseudouridine synthase RluA family.</text>
</comment>
<name>PUS5_CANAL</name>
<protein>
    <recommendedName>
        <fullName>21S rRNA pseudouridine(2819) synthase</fullName>
        <ecNumber evidence="2">5.4.99.43</ecNumber>
    </recommendedName>
    <alternativeName>
        <fullName>Pseudouridine synthase 5</fullName>
    </alternativeName>
    <alternativeName>
        <fullName>Pseudouridylate synthase PUS5</fullName>
    </alternativeName>
    <alternativeName>
        <fullName>Uracil hydrolyase PUS5</fullName>
    </alternativeName>
</protein>
<reference key="1">
    <citation type="journal article" date="2004" name="Proc. Natl. Acad. Sci. U.S.A.">
        <title>The diploid genome sequence of Candida albicans.</title>
        <authorList>
            <person name="Jones T."/>
            <person name="Federspiel N.A."/>
            <person name="Chibana H."/>
            <person name="Dungan J."/>
            <person name="Kalman S."/>
            <person name="Magee B.B."/>
            <person name="Newport G."/>
            <person name="Thorstenson Y.R."/>
            <person name="Agabian N."/>
            <person name="Magee P.T."/>
            <person name="Davis R.W."/>
            <person name="Scherer S."/>
        </authorList>
    </citation>
    <scope>NUCLEOTIDE SEQUENCE [LARGE SCALE GENOMIC DNA]</scope>
    <source>
        <strain>SC5314 / ATCC MYA-2876</strain>
    </source>
</reference>
<reference key="2">
    <citation type="journal article" date="2007" name="Genome Biol.">
        <title>Assembly of the Candida albicans genome into sixteen supercontigs aligned on the eight chromosomes.</title>
        <authorList>
            <person name="van het Hoog M."/>
            <person name="Rast T.J."/>
            <person name="Martchenko M."/>
            <person name="Grindle S."/>
            <person name="Dignard D."/>
            <person name="Hogues H."/>
            <person name="Cuomo C."/>
            <person name="Berriman M."/>
            <person name="Scherer S."/>
            <person name="Magee B.B."/>
            <person name="Whiteway M."/>
            <person name="Chibana H."/>
            <person name="Nantel A."/>
            <person name="Magee P.T."/>
        </authorList>
    </citation>
    <scope>GENOME REANNOTATION</scope>
    <source>
        <strain>SC5314 / ATCC MYA-2876</strain>
    </source>
</reference>
<reference key="3">
    <citation type="journal article" date="2013" name="Genome Biol.">
        <title>Assembly of a phased diploid Candida albicans genome facilitates allele-specific measurements and provides a simple model for repeat and indel structure.</title>
        <authorList>
            <person name="Muzzey D."/>
            <person name="Schwartz K."/>
            <person name="Weissman J.S."/>
            <person name="Sherlock G."/>
        </authorList>
    </citation>
    <scope>NUCLEOTIDE SEQUENCE [LARGE SCALE GENOMIC DNA]</scope>
    <scope>GENOME REANNOTATION</scope>
    <source>
        <strain>SC5314 / ATCC MYA-2876</strain>
    </source>
</reference>
<dbReference type="EC" id="5.4.99.43" evidence="2"/>
<dbReference type="EMBL" id="CP017626">
    <property type="protein sequence ID" value="AOW29416.1"/>
    <property type="molecule type" value="Genomic_DNA"/>
</dbReference>
<dbReference type="RefSeq" id="XP_715423.2">
    <property type="nucleotide sequence ID" value="XM_710330.2"/>
</dbReference>
<dbReference type="SMR" id="Q5A0Y2"/>
<dbReference type="FunCoup" id="Q5A0Y2">
    <property type="interactions" value="102"/>
</dbReference>
<dbReference type="STRING" id="237561.Q5A0Y2"/>
<dbReference type="EnsemblFungi" id="C4_06950W_A-T">
    <property type="protein sequence ID" value="C4_06950W_A-T-p1"/>
    <property type="gene ID" value="C4_06950W_A"/>
</dbReference>
<dbReference type="GeneID" id="3642927"/>
<dbReference type="KEGG" id="cal:CAALFM_C406950WA"/>
<dbReference type="CGD" id="CAL0000185188">
    <property type="gene designation" value="orf19.10626"/>
</dbReference>
<dbReference type="VEuPathDB" id="FungiDB:C4_06950W_A"/>
<dbReference type="eggNOG" id="KOG1919">
    <property type="taxonomic scope" value="Eukaryota"/>
</dbReference>
<dbReference type="HOGENOM" id="CLU_998077_0_0_1"/>
<dbReference type="InParanoid" id="Q5A0Y2"/>
<dbReference type="OrthoDB" id="428658at2759"/>
<dbReference type="PRO" id="PR:Q5A0Y2"/>
<dbReference type="Proteomes" id="UP000000559">
    <property type="component" value="Chromosome 4"/>
</dbReference>
<dbReference type="GO" id="GO:0005739">
    <property type="term" value="C:mitochondrion"/>
    <property type="evidence" value="ECO:0007669"/>
    <property type="project" value="UniProtKB-SubCell"/>
</dbReference>
<dbReference type="GO" id="GO:0160143">
    <property type="term" value="F:21S rRNA pseudouridine(2819) synthase activity"/>
    <property type="evidence" value="ECO:0007669"/>
    <property type="project" value="UniProtKB-EC"/>
</dbReference>
<dbReference type="GO" id="GO:0009982">
    <property type="term" value="F:pseudouridine synthase activity"/>
    <property type="evidence" value="ECO:0000318"/>
    <property type="project" value="GO_Central"/>
</dbReference>
<dbReference type="GO" id="GO:0003723">
    <property type="term" value="F:RNA binding"/>
    <property type="evidence" value="ECO:0007669"/>
    <property type="project" value="InterPro"/>
</dbReference>
<dbReference type="GO" id="GO:0000455">
    <property type="term" value="P:enzyme-directed rRNA pseudouridine synthesis"/>
    <property type="evidence" value="ECO:0000318"/>
    <property type="project" value="GO_Central"/>
</dbReference>
<dbReference type="CDD" id="cd02869">
    <property type="entry name" value="PseudoU_synth_RluA_like"/>
    <property type="match status" value="1"/>
</dbReference>
<dbReference type="Gene3D" id="3.30.2350.10">
    <property type="entry name" value="Pseudouridine synthase"/>
    <property type="match status" value="1"/>
</dbReference>
<dbReference type="InterPro" id="IPR020103">
    <property type="entry name" value="PsdUridine_synth_cat_dom_sf"/>
</dbReference>
<dbReference type="InterPro" id="IPR006224">
    <property type="entry name" value="PsdUridine_synth_RluA-like_CS"/>
</dbReference>
<dbReference type="InterPro" id="IPR006145">
    <property type="entry name" value="PsdUridine_synth_RsuA/RluA"/>
</dbReference>
<dbReference type="InterPro" id="IPR050188">
    <property type="entry name" value="RluA_PseudoU_synthase"/>
</dbReference>
<dbReference type="PANTHER" id="PTHR21600:SF81">
    <property type="entry name" value="21S RRNA PSEUDOURIDINE(2819) SYNTHASE"/>
    <property type="match status" value="1"/>
</dbReference>
<dbReference type="PANTHER" id="PTHR21600">
    <property type="entry name" value="MITOCHONDRIAL RNA PSEUDOURIDINE SYNTHASE"/>
    <property type="match status" value="1"/>
</dbReference>
<dbReference type="Pfam" id="PF00849">
    <property type="entry name" value="PseudoU_synth_2"/>
    <property type="match status" value="1"/>
</dbReference>
<dbReference type="SUPFAM" id="SSF55120">
    <property type="entry name" value="Pseudouridine synthase"/>
    <property type="match status" value="1"/>
</dbReference>
<dbReference type="PROSITE" id="PS01129">
    <property type="entry name" value="PSI_RLU"/>
    <property type="match status" value="1"/>
</dbReference>
<evidence type="ECO:0000250" key="1">
    <source>
        <dbReference type="UniProtKB" id="P0AA37"/>
    </source>
</evidence>
<evidence type="ECO:0000250" key="2">
    <source>
        <dbReference type="UniProtKB" id="Q06244"/>
    </source>
</evidence>
<evidence type="ECO:0000305" key="3"/>
<sequence length="248" mass="28391">MKLDLVKRTFNYAVVNKPSGMVCDASHTNNIITALTNEFTKILPSVNSSQFRLVQRLDRFVTGGLVVARNKKWADKVRKSFFQEGTLRLTRRYVGLIALDQIPESTQGTIDFPIQALEKDYRGKNKSRELFTYSAVTHYKLIPSARRTIKGVFPVFQQGPILPIILELETGRKNQIRDHIIQKFGVPLLNDDNFSDFKLNSEIPKDVNSKLYKSNQIALHSGLVIMENNGISQQFLFPVNNAYDRELW</sequence>